<evidence type="ECO:0000250" key="1">
    <source>
        <dbReference type="UniProtKB" id="P19367"/>
    </source>
</evidence>
<evidence type="ECO:0000250" key="2">
    <source>
        <dbReference type="UniProtKB" id="Q2TB90"/>
    </source>
</evidence>
<evidence type="ECO:0000255" key="3">
    <source>
        <dbReference type="PROSITE-ProRule" id="PRU01084"/>
    </source>
</evidence>
<evidence type="ECO:0000269" key="4">
    <source>
    </source>
</evidence>
<evidence type="ECO:0000269" key="5">
    <source>
    </source>
</evidence>
<evidence type="ECO:0000269" key="6">
    <source>
    </source>
</evidence>
<evidence type="ECO:0000269" key="7">
    <source>
    </source>
</evidence>
<evidence type="ECO:0000305" key="8"/>
<evidence type="ECO:0000312" key="9">
    <source>
        <dbReference type="MGI" id="MGI:2384910"/>
    </source>
</evidence>
<gene>
    <name evidence="9" type="primary">Hkdc1</name>
</gene>
<comment type="function">
    <text evidence="2 4 5 7">Catalyzes the phosphorylation of hexose to hexose 6-phosphate, although at very low level compared to other hexokinases (By similarity). Has low glucose phosphorylating activity compared to other hexokinases (By similarity). Involved in glucose homeostasis and hepatic lipid accumulation (PubMed:30543855). Required to maintain whole-body glucose homeostasis during pregnancy; however additional evidences are required to confirm this role (PubMed:25648650, PubMed:27459389).</text>
</comment>
<comment type="catalytic activity">
    <reaction evidence="2">
        <text>a D-hexose + ATP = a D-hexose 6-phosphate + ADP + H(+)</text>
        <dbReference type="Rhea" id="RHEA:22740"/>
        <dbReference type="ChEBI" id="CHEBI:4194"/>
        <dbReference type="ChEBI" id="CHEBI:15378"/>
        <dbReference type="ChEBI" id="CHEBI:30616"/>
        <dbReference type="ChEBI" id="CHEBI:229467"/>
        <dbReference type="ChEBI" id="CHEBI:456216"/>
        <dbReference type="EC" id="2.7.1.1"/>
    </reaction>
    <physiologicalReaction direction="left-to-right" evidence="2">
        <dbReference type="Rhea" id="RHEA:22741"/>
    </physiologicalReaction>
</comment>
<comment type="catalytic activity">
    <reaction evidence="2">
        <text>D-glucose + ATP = D-glucose 6-phosphate + ADP + H(+)</text>
        <dbReference type="Rhea" id="RHEA:17825"/>
        <dbReference type="ChEBI" id="CHEBI:4167"/>
        <dbReference type="ChEBI" id="CHEBI:15378"/>
        <dbReference type="ChEBI" id="CHEBI:30616"/>
        <dbReference type="ChEBI" id="CHEBI:61548"/>
        <dbReference type="ChEBI" id="CHEBI:456216"/>
        <dbReference type="EC" id="2.7.1.1"/>
    </reaction>
    <physiologicalReaction direction="left-to-right" evidence="2">
        <dbReference type="Rhea" id="RHEA:17826"/>
    </physiologicalReaction>
</comment>
<comment type="pathway">
    <text evidence="2">Carbohydrate metabolism; hexose metabolism.</text>
</comment>
<comment type="pathway">
    <text evidence="2">Carbohydrate degradation; glycolysis; D-glyceraldehyde 3-phosphate and glycerone phosphate from D-glucose: step 1/4.</text>
</comment>
<comment type="subcellular location">
    <subcellularLocation>
        <location evidence="2">Cytoplasm</location>
    </subcellularLocation>
    <subcellularLocation>
        <location evidence="2">Mitochondrion membrane</location>
        <topology evidence="2">Peripheral membrane protein</topology>
    </subcellularLocation>
    <subcellularLocation>
        <location evidence="6">Photoreceptor inner segment</location>
    </subcellularLocation>
    <text evidence="2">The mitochondrial-binding peptide (MBP) region promotes association with the mitochondrion.</text>
</comment>
<comment type="tissue specificity">
    <text evidence="5 6">Widely expressed. Detected in retina, brain, cerebellum, liver, lung, kidney, spleen, pancreas and intestine (PubMed:30085091).</text>
</comment>
<comment type="disruption phenotype">
    <text evidence="5">Embryonic lethality.</text>
</comment>
<comment type="similarity">
    <text evidence="3 8">Belongs to the hexokinase family.</text>
</comment>
<proteinExistence type="evidence at transcript level"/>
<dbReference type="EC" id="2.7.1.1" evidence="2"/>
<dbReference type="EMBL" id="AK145980">
    <property type="protein sequence ID" value="BAE26802.1"/>
    <property type="molecule type" value="mRNA"/>
</dbReference>
<dbReference type="EMBL" id="BC016235">
    <property type="protein sequence ID" value="AAH16235.1"/>
    <property type="molecule type" value="mRNA"/>
</dbReference>
<dbReference type="CCDS" id="CCDS23888.1"/>
<dbReference type="RefSeq" id="NP_663394.1">
    <property type="nucleotide sequence ID" value="NM_145419.1"/>
</dbReference>
<dbReference type="SMR" id="Q91W97"/>
<dbReference type="BioGRID" id="229687">
    <property type="interactions" value="7"/>
</dbReference>
<dbReference type="FunCoup" id="Q91W97">
    <property type="interactions" value="402"/>
</dbReference>
<dbReference type="IntAct" id="Q91W97">
    <property type="interactions" value="1"/>
</dbReference>
<dbReference type="STRING" id="10090.ENSMUSP00000020277"/>
<dbReference type="iPTMnet" id="Q91W97"/>
<dbReference type="PhosphoSitePlus" id="Q91W97"/>
<dbReference type="jPOST" id="Q91W97"/>
<dbReference type="PaxDb" id="10090-ENSMUSP00000020277"/>
<dbReference type="PeptideAtlas" id="Q91W97"/>
<dbReference type="ProteomicsDB" id="273146"/>
<dbReference type="Pumba" id="Q91W97"/>
<dbReference type="Antibodypedia" id="2524">
    <property type="antibodies" value="146 antibodies from 26 providers"/>
</dbReference>
<dbReference type="DNASU" id="216019"/>
<dbReference type="Ensembl" id="ENSMUST00000020277.9">
    <property type="protein sequence ID" value="ENSMUSP00000020277.9"/>
    <property type="gene ID" value="ENSMUSG00000020080.9"/>
</dbReference>
<dbReference type="GeneID" id="216019"/>
<dbReference type="KEGG" id="mmu:216019"/>
<dbReference type="UCSC" id="uc007fhc.1">
    <property type="organism name" value="mouse"/>
</dbReference>
<dbReference type="AGR" id="MGI:2384910"/>
<dbReference type="CTD" id="80201"/>
<dbReference type="MGI" id="MGI:2384910">
    <property type="gene designation" value="Hkdc1"/>
</dbReference>
<dbReference type="VEuPathDB" id="HostDB:ENSMUSG00000020080"/>
<dbReference type="eggNOG" id="KOG1369">
    <property type="taxonomic scope" value="Eukaryota"/>
</dbReference>
<dbReference type="GeneTree" id="ENSGT00950000182787"/>
<dbReference type="HOGENOM" id="CLU_014393_1_0_1"/>
<dbReference type="InParanoid" id="Q91W97"/>
<dbReference type="OMA" id="RKLAPNC"/>
<dbReference type="OrthoDB" id="419537at2759"/>
<dbReference type="PhylomeDB" id="Q91W97"/>
<dbReference type="TreeFam" id="TF314238"/>
<dbReference type="Reactome" id="R-MMU-70171">
    <property type="pathway name" value="Glycolysis"/>
</dbReference>
<dbReference type="UniPathway" id="UPA00109">
    <property type="reaction ID" value="UER00180"/>
</dbReference>
<dbReference type="UniPathway" id="UPA00242"/>
<dbReference type="BioGRID-ORCS" id="216019">
    <property type="hits" value="2 hits in 79 CRISPR screens"/>
</dbReference>
<dbReference type="PRO" id="PR:Q91W97"/>
<dbReference type="Proteomes" id="UP000000589">
    <property type="component" value="Chromosome 10"/>
</dbReference>
<dbReference type="RNAct" id="Q91W97">
    <property type="molecule type" value="protein"/>
</dbReference>
<dbReference type="Bgee" id="ENSMUSG00000020080">
    <property type="expression patterns" value="Expressed in kidney calyx and 90 other cell types or tissues"/>
</dbReference>
<dbReference type="GO" id="GO:0031966">
    <property type="term" value="C:mitochondrial membrane"/>
    <property type="evidence" value="ECO:0007669"/>
    <property type="project" value="UniProtKB-SubCell"/>
</dbReference>
<dbReference type="GO" id="GO:0005739">
    <property type="term" value="C:mitochondrion"/>
    <property type="evidence" value="ECO:0000250"/>
    <property type="project" value="UniProtKB"/>
</dbReference>
<dbReference type="GO" id="GO:0001917">
    <property type="term" value="C:photoreceptor inner segment"/>
    <property type="evidence" value="ECO:0000314"/>
    <property type="project" value="UniProtKB"/>
</dbReference>
<dbReference type="GO" id="GO:0005524">
    <property type="term" value="F:ATP binding"/>
    <property type="evidence" value="ECO:0007669"/>
    <property type="project" value="UniProtKB-KW"/>
</dbReference>
<dbReference type="GO" id="GO:0005536">
    <property type="term" value="F:D-glucose binding"/>
    <property type="evidence" value="ECO:0007669"/>
    <property type="project" value="InterPro"/>
</dbReference>
<dbReference type="GO" id="GO:0004340">
    <property type="term" value="F:glucokinase activity"/>
    <property type="evidence" value="ECO:0000250"/>
    <property type="project" value="UniProtKB"/>
</dbReference>
<dbReference type="GO" id="GO:0051156">
    <property type="term" value="P:glucose 6-phosphate metabolic process"/>
    <property type="evidence" value="ECO:0000250"/>
    <property type="project" value="UniProtKB"/>
</dbReference>
<dbReference type="GO" id="GO:0006096">
    <property type="term" value="P:glycolytic process"/>
    <property type="evidence" value="ECO:0007669"/>
    <property type="project" value="UniProtKB-UniPathway"/>
</dbReference>
<dbReference type="GO" id="GO:0019318">
    <property type="term" value="P:hexose metabolic process"/>
    <property type="evidence" value="ECO:0007669"/>
    <property type="project" value="UniProtKB-UniPathway"/>
</dbReference>
<dbReference type="GO" id="GO:0001678">
    <property type="term" value="P:intracellular glucose homeostasis"/>
    <property type="evidence" value="ECO:0000315"/>
    <property type="project" value="UniProtKB"/>
</dbReference>
<dbReference type="CDD" id="cd24126">
    <property type="entry name" value="ASKHA_NBD_HKDC1_meta_rpt1"/>
    <property type="match status" value="1"/>
</dbReference>
<dbReference type="CDD" id="cd24130">
    <property type="entry name" value="ASKHA_NBD_HKDC1_meta_rpt2"/>
    <property type="match status" value="1"/>
</dbReference>
<dbReference type="FunFam" id="3.30.420.40:FF:000015">
    <property type="entry name" value="Hexokinase 1"/>
    <property type="match status" value="2"/>
</dbReference>
<dbReference type="FunFam" id="3.40.367.20:FF:000001">
    <property type="entry name" value="Hexokinase 1"/>
    <property type="match status" value="1"/>
</dbReference>
<dbReference type="FunFam" id="3.40.367.20:FF:000020">
    <property type="entry name" value="Hexokinase-1"/>
    <property type="match status" value="1"/>
</dbReference>
<dbReference type="Gene3D" id="3.30.420.40">
    <property type="match status" value="2"/>
</dbReference>
<dbReference type="Gene3D" id="3.40.367.20">
    <property type="match status" value="2"/>
</dbReference>
<dbReference type="InterPro" id="IPR043129">
    <property type="entry name" value="ATPase_NBD"/>
</dbReference>
<dbReference type="InterPro" id="IPR001312">
    <property type="entry name" value="Hexokinase"/>
</dbReference>
<dbReference type="InterPro" id="IPR019807">
    <property type="entry name" value="Hexokinase_BS"/>
</dbReference>
<dbReference type="InterPro" id="IPR022673">
    <property type="entry name" value="Hexokinase_C"/>
</dbReference>
<dbReference type="InterPro" id="IPR022672">
    <property type="entry name" value="Hexokinase_N"/>
</dbReference>
<dbReference type="PANTHER" id="PTHR19443">
    <property type="entry name" value="HEXOKINASE"/>
    <property type="match status" value="1"/>
</dbReference>
<dbReference type="PANTHER" id="PTHR19443:SF28">
    <property type="entry name" value="HEXOKINASE HKDC1"/>
    <property type="match status" value="1"/>
</dbReference>
<dbReference type="Pfam" id="PF00349">
    <property type="entry name" value="Hexokinase_1"/>
    <property type="match status" value="2"/>
</dbReference>
<dbReference type="Pfam" id="PF03727">
    <property type="entry name" value="Hexokinase_2"/>
    <property type="match status" value="2"/>
</dbReference>
<dbReference type="PRINTS" id="PR00475">
    <property type="entry name" value="HEXOKINASE"/>
</dbReference>
<dbReference type="SUPFAM" id="SSF53067">
    <property type="entry name" value="Actin-like ATPase domain"/>
    <property type="match status" value="4"/>
</dbReference>
<dbReference type="PROSITE" id="PS00378">
    <property type="entry name" value="HEXOKINASE_1"/>
    <property type="match status" value="1"/>
</dbReference>
<dbReference type="PROSITE" id="PS51748">
    <property type="entry name" value="HEXOKINASE_2"/>
    <property type="match status" value="2"/>
</dbReference>
<feature type="chain" id="PRO_0000299036" description="Hexokinase HKDC1">
    <location>
        <begin position="1"/>
        <end position="915"/>
    </location>
</feature>
<feature type="domain" description="Hexokinase 1" evidence="3">
    <location>
        <begin position="16"/>
        <end position="458"/>
    </location>
</feature>
<feature type="domain" description="Hexokinase 2" evidence="3">
    <location>
        <begin position="464"/>
        <end position="903"/>
    </location>
</feature>
<feature type="region of interest" description="Mitochondrial-binding peptide (MBP)" evidence="2">
    <location>
        <begin position="1"/>
        <end position="20"/>
    </location>
</feature>
<feature type="region of interest" description="Hexokinase small subdomain 1" evidence="3">
    <location>
        <begin position="73"/>
        <end position="207"/>
    </location>
</feature>
<feature type="region of interest" description="Hexokinase large subdomain 1" evidence="3">
    <location>
        <begin position="208"/>
        <end position="447"/>
    </location>
</feature>
<feature type="region of interest" description="Hexokinase small subdomain 2" evidence="3">
    <location>
        <begin position="521"/>
        <end position="652"/>
    </location>
</feature>
<feature type="region of interest" description="Hexokinase large subdomain 2" evidence="3">
    <location>
        <begin position="653"/>
        <end position="892"/>
    </location>
</feature>
<feature type="binding site" evidence="1">
    <location>
        <position position="30"/>
    </location>
    <ligand>
        <name>ATP</name>
        <dbReference type="ChEBI" id="CHEBI:30616"/>
        <label>1</label>
    </ligand>
</feature>
<feature type="binding site" evidence="1">
    <location>
        <begin position="84"/>
        <end position="91"/>
    </location>
    <ligand>
        <name>D-glucose 6-phosphate</name>
        <dbReference type="ChEBI" id="CHEBI:61548"/>
        <label>1</label>
    </ligand>
</feature>
<feature type="binding site" evidence="1">
    <location>
        <begin position="84"/>
        <end position="89"/>
    </location>
    <ligand>
        <name>ATP</name>
        <dbReference type="ChEBI" id="CHEBI:30616"/>
        <label>1</label>
    </ligand>
</feature>
<feature type="binding site" evidence="1">
    <location>
        <position position="155"/>
    </location>
    <ligand>
        <name>D-glucose</name>
        <dbReference type="ChEBI" id="CHEBI:4167"/>
        <label>1</label>
    </ligand>
</feature>
<feature type="binding site" evidence="1">
    <location>
        <begin position="172"/>
        <end position="173"/>
    </location>
    <ligand>
        <name>D-glucose</name>
        <dbReference type="ChEBI" id="CHEBI:4167"/>
        <label>1</label>
    </ligand>
</feature>
<feature type="binding site" evidence="1">
    <location>
        <begin position="208"/>
        <end position="209"/>
    </location>
    <ligand>
        <name>D-glucose</name>
        <dbReference type="ChEBI" id="CHEBI:4167"/>
        <label>1</label>
    </ligand>
</feature>
<feature type="binding site" evidence="1">
    <location>
        <position position="209"/>
    </location>
    <ligand>
        <name>D-glucose 6-phosphate</name>
        <dbReference type="ChEBI" id="CHEBI:61548"/>
        <label>1</label>
    </ligand>
</feature>
<feature type="binding site" evidence="1">
    <location>
        <position position="232"/>
    </location>
    <ligand>
        <name>D-glucose 6-phosphate</name>
        <dbReference type="ChEBI" id="CHEBI:61548"/>
        <label>1</label>
    </ligand>
</feature>
<feature type="binding site" evidence="1">
    <location>
        <position position="235"/>
    </location>
    <ligand>
        <name>D-glucose</name>
        <dbReference type="ChEBI" id="CHEBI:4167"/>
        <label>1</label>
    </ligand>
</feature>
<feature type="binding site" evidence="1">
    <location>
        <position position="260"/>
    </location>
    <ligand>
        <name>D-glucose</name>
        <dbReference type="ChEBI" id="CHEBI:4167"/>
        <label>1</label>
    </ligand>
</feature>
<feature type="binding site" evidence="1">
    <location>
        <begin position="291"/>
        <end position="294"/>
    </location>
    <ligand>
        <name>D-glucose</name>
        <dbReference type="ChEBI" id="CHEBI:4167"/>
        <label>1</label>
    </ligand>
</feature>
<feature type="binding site" evidence="1">
    <location>
        <begin position="413"/>
        <end position="415"/>
    </location>
    <ligand>
        <name>D-glucose 6-phosphate</name>
        <dbReference type="ChEBI" id="CHEBI:61548"/>
        <label>1</label>
    </ligand>
</feature>
<feature type="binding site" evidence="1">
    <location>
        <begin position="425"/>
        <end position="426"/>
    </location>
    <ligand>
        <name>ATP</name>
        <dbReference type="ChEBI" id="CHEBI:30616"/>
        <label>1</label>
    </ligand>
</feature>
<feature type="binding site" evidence="1">
    <location>
        <position position="449"/>
    </location>
    <ligand>
        <name>D-glucose 6-phosphate</name>
        <dbReference type="ChEBI" id="CHEBI:61548"/>
        <label>1</label>
    </ligand>
</feature>
<feature type="binding site" evidence="1">
    <location>
        <begin position="532"/>
        <end position="537"/>
    </location>
    <ligand>
        <name>ATP</name>
        <dbReference type="ChEBI" id="CHEBI:30616"/>
        <label>2</label>
    </ligand>
</feature>
<feature type="binding site" evidence="1">
    <location>
        <begin position="532"/>
        <end position="536"/>
    </location>
    <ligand>
        <name>D-glucose 6-phosphate</name>
        <dbReference type="ChEBI" id="CHEBI:61548"/>
        <label>2</label>
    </ligand>
</feature>
<feature type="binding site" evidence="1">
    <location>
        <begin position="600"/>
        <end position="601"/>
    </location>
    <ligand>
        <name>D-glucose</name>
        <dbReference type="ChEBI" id="CHEBI:4167"/>
        <label>2</label>
    </ligand>
</feature>
<feature type="binding site" evidence="1">
    <location>
        <begin position="617"/>
        <end position="618"/>
    </location>
    <ligand>
        <name>D-glucose</name>
        <dbReference type="ChEBI" id="CHEBI:4167"/>
        <label>2</label>
    </ligand>
</feature>
<feature type="binding site" evidence="1">
    <location>
        <begin position="653"/>
        <end position="654"/>
    </location>
    <ligand>
        <name>D-glucose</name>
        <dbReference type="ChEBI" id="CHEBI:4167"/>
        <label>2</label>
    </ligand>
</feature>
<feature type="binding site" evidence="1">
    <location>
        <position position="654"/>
    </location>
    <ligand>
        <name>D-glucose 6-phosphate</name>
        <dbReference type="ChEBI" id="CHEBI:61548"/>
        <label>2</label>
    </ligand>
</feature>
<feature type="binding site" evidence="1">
    <location>
        <position position="677"/>
    </location>
    <ligand>
        <name>ATP</name>
        <dbReference type="ChEBI" id="CHEBI:30616"/>
        <label>2</label>
    </ligand>
</feature>
<feature type="binding site" evidence="1">
    <location>
        <position position="677"/>
    </location>
    <ligand>
        <name>D-glucose 6-phosphate</name>
        <dbReference type="ChEBI" id="CHEBI:61548"/>
        <label>2</label>
    </ligand>
</feature>
<feature type="binding site" evidence="1">
    <location>
        <begin position="679"/>
        <end position="680"/>
    </location>
    <ligand>
        <name>D-glucose</name>
        <dbReference type="ChEBI" id="CHEBI:4167"/>
        <label>2</label>
    </ligand>
</feature>
<feature type="binding site" evidence="1">
    <location>
        <position position="705"/>
    </location>
    <ligand>
        <name>D-glucose</name>
        <dbReference type="ChEBI" id="CHEBI:4167"/>
        <label>2</label>
    </ligand>
</feature>
<feature type="binding site" evidence="1">
    <location>
        <position position="739"/>
    </location>
    <ligand>
        <name>D-glucose</name>
        <dbReference type="ChEBI" id="CHEBI:4167"/>
        <label>2</label>
    </ligand>
</feature>
<feature type="binding site" evidence="1">
    <location>
        <begin position="744"/>
        <end position="745"/>
    </location>
    <ligand>
        <name>ATP</name>
        <dbReference type="ChEBI" id="CHEBI:30616"/>
        <label>2</label>
    </ligand>
</feature>
<feature type="binding site" evidence="1">
    <location>
        <begin position="781"/>
        <end position="785"/>
    </location>
    <ligand>
        <name>ATP</name>
        <dbReference type="ChEBI" id="CHEBI:30616"/>
        <label>2</label>
    </ligand>
</feature>
<feature type="binding site" evidence="1">
    <location>
        <begin position="858"/>
        <end position="860"/>
    </location>
    <ligand>
        <name>D-glucose 6-phosphate</name>
        <dbReference type="ChEBI" id="CHEBI:61548"/>
        <label>2</label>
    </ligand>
</feature>
<feature type="binding site" evidence="1">
    <location>
        <begin position="860"/>
        <end position="864"/>
    </location>
    <ligand>
        <name>ATP</name>
        <dbReference type="ChEBI" id="CHEBI:30616"/>
        <label>2</label>
    </ligand>
</feature>
<feature type="binding site" evidence="1">
    <location>
        <position position="894"/>
    </location>
    <ligand>
        <name>D-glucose 6-phosphate</name>
        <dbReference type="ChEBI" id="CHEBI:61548"/>
        <label>2</label>
    </ligand>
</feature>
<feature type="sequence conflict" description="In Ref. 1; BAE26802." evidence="8" ref="1">
    <original>N</original>
    <variation>D</variation>
    <location>
        <position position="208"/>
    </location>
</feature>
<feature type="sequence conflict" description="In Ref. 1; BAE26802." evidence="8" ref="1">
    <original>M</original>
    <variation>T</variation>
    <location>
        <position position="745"/>
    </location>
</feature>
<sequence length="915" mass="102259">MFAVHLVAFYFTKLKEDQIKKVDRFLYHMRLSDETLVDIMARFQAEMEKGLGKDTNPTASVKMLPTFVRAIPDGSENGEFLSLDLGGSKFRVLKVQVSQEGQQNVQMESQFYPMPNEITRGNGTELFDYVADCLADFMKTKNLTHKKLPLGFTFSFPCRQNKLEEGVLLSWTKKFKARGVQDTDVVNRLATAMKKHKDLDVDILALVNDTVGTMMTCAYDDPNCEVGVIIGTGTNACYMEDMSNIDLVEGDEGRMCINTEWGAFGDDGALEDIRTEFDRELDLGSLNPGKQLFEKMISGLYMGELVRLILLKMAKVGLLFGGAKSSALHTKGKIETQHVAAMEMSKEGLANTREILVDLGLEPSESDCIAVQHVCTIVSFRSANLCAAALATILTRLRENKKLARLRTTVGMDGTLYKTHPQYPKRLHKVVRRLVPNCDVRFLLSESGSTKGAAMVTAVASRVQAQRKQIDKVLALFQLTREQLLGVRDKMRAELEYGLKKKTHSLATVKMLPTYVYGMPDGTEKGKFLALDLGGTNFRVLLVKIRRRSVRMYNKIFAIPLEIMQGTGEELFDHIVQCIADFLDYMGLKGAQLPLGFTFSFPCRQTCIDKGTLVGWTKGFKATDCEGEDVVDMLREAIKRRNEFDLDIVAIVNDTVGTMMTCGYEDPRCEIGLIAGTGSNVCYMEEMRNIELVDGDEGRMCVNTEWGGFGDNGCIDDIRTQYDKEVDEGSLNAGKQRYEKMTSGMYLGEIVRRILIDLTRQGLLFRGQISERLRTRGIFETKFLSQIESDRLALLQVRRILQQLGLDSTCEDSIVVKEVCGAVSRRAAQMCGAGMAAIVEKRREDQGLQHFKVTVGVDGTLYKLHPHFSRILQETVKELAPQCDVTFMLSEDGSGKGAALITAVAKRLQQPRKDI</sequence>
<protein>
    <recommendedName>
        <fullName evidence="8">Hexokinase HKDC1</fullName>
        <ecNumber evidence="2">2.7.1.1</ecNumber>
    </recommendedName>
    <alternativeName>
        <fullName evidence="8">Hexokinase domain-containing protein 1</fullName>
    </alternativeName>
</protein>
<accession>Q91W97</accession>
<accession>Q3UKJ9</accession>
<reference key="1">
    <citation type="journal article" date="2005" name="Science">
        <title>The transcriptional landscape of the mammalian genome.</title>
        <authorList>
            <person name="Carninci P."/>
            <person name="Kasukawa T."/>
            <person name="Katayama S."/>
            <person name="Gough J."/>
            <person name="Frith M.C."/>
            <person name="Maeda N."/>
            <person name="Oyama R."/>
            <person name="Ravasi T."/>
            <person name="Lenhard B."/>
            <person name="Wells C."/>
            <person name="Kodzius R."/>
            <person name="Shimokawa K."/>
            <person name="Bajic V.B."/>
            <person name="Brenner S.E."/>
            <person name="Batalov S."/>
            <person name="Forrest A.R."/>
            <person name="Zavolan M."/>
            <person name="Davis M.J."/>
            <person name="Wilming L.G."/>
            <person name="Aidinis V."/>
            <person name="Allen J.E."/>
            <person name="Ambesi-Impiombato A."/>
            <person name="Apweiler R."/>
            <person name="Aturaliya R.N."/>
            <person name="Bailey T.L."/>
            <person name="Bansal M."/>
            <person name="Baxter L."/>
            <person name="Beisel K.W."/>
            <person name="Bersano T."/>
            <person name="Bono H."/>
            <person name="Chalk A.M."/>
            <person name="Chiu K.P."/>
            <person name="Choudhary V."/>
            <person name="Christoffels A."/>
            <person name="Clutterbuck D.R."/>
            <person name="Crowe M.L."/>
            <person name="Dalla E."/>
            <person name="Dalrymple B.P."/>
            <person name="de Bono B."/>
            <person name="Della Gatta G."/>
            <person name="di Bernardo D."/>
            <person name="Down T."/>
            <person name="Engstrom P."/>
            <person name="Fagiolini M."/>
            <person name="Faulkner G."/>
            <person name="Fletcher C.F."/>
            <person name="Fukushima T."/>
            <person name="Furuno M."/>
            <person name="Futaki S."/>
            <person name="Gariboldi M."/>
            <person name="Georgii-Hemming P."/>
            <person name="Gingeras T.R."/>
            <person name="Gojobori T."/>
            <person name="Green R.E."/>
            <person name="Gustincich S."/>
            <person name="Harbers M."/>
            <person name="Hayashi Y."/>
            <person name="Hensch T.K."/>
            <person name="Hirokawa N."/>
            <person name="Hill D."/>
            <person name="Huminiecki L."/>
            <person name="Iacono M."/>
            <person name="Ikeo K."/>
            <person name="Iwama A."/>
            <person name="Ishikawa T."/>
            <person name="Jakt M."/>
            <person name="Kanapin A."/>
            <person name="Katoh M."/>
            <person name="Kawasawa Y."/>
            <person name="Kelso J."/>
            <person name="Kitamura H."/>
            <person name="Kitano H."/>
            <person name="Kollias G."/>
            <person name="Krishnan S.P."/>
            <person name="Kruger A."/>
            <person name="Kummerfeld S.K."/>
            <person name="Kurochkin I.V."/>
            <person name="Lareau L.F."/>
            <person name="Lazarevic D."/>
            <person name="Lipovich L."/>
            <person name="Liu J."/>
            <person name="Liuni S."/>
            <person name="McWilliam S."/>
            <person name="Madan Babu M."/>
            <person name="Madera M."/>
            <person name="Marchionni L."/>
            <person name="Matsuda H."/>
            <person name="Matsuzawa S."/>
            <person name="Miki H."/>
            <person name="Mignone F."/>
            <person name="Miyake S."/>
            <person name="Morris K."/>
            <person name="Mottagui-Tabar S."/>
            <person name="Mulder N."/>
            <person name="Nakano N."/>
            <person name="Nakauchi H."/>
            <person name="Ng P."/>
            <person name="Nilsson R."/>
            <person name="Nishiguchi S."/>
            <person name="Nishikawa S."/>
            <person name="Nori F."/>
            <person name="Ohara O."/>
            <person name="Okazaki Y."/>
            <person name="Orlando V."/>
            <person name="Pang K.C."/>
            <person name="Pavan W.J."/>
            <person name="Pavesi G."/>
            <person name="Pesole G."/>
            <person name="Petrovsky N."/>
            <person name="Piazza S."/>
            <person name="Reed J."/>
            <person name="Reid J.F."/>
            <person name="Ring B.Z."/>
            <person name="Ringwald M."/>
            <person name="Rost B."/>
            <person name="Ruan Y."/>
            <person name="Salzberg S.L."/>
            <person name="Sandelin A."/>
            <person name="Schneider C."/>
            <person name="Schoenbach C."/>
            <person name="Sekiguchi K."/>
            <person name="Semple C.A."/>
            <person name="Seno S."/>
            <person name="Sessa L."/>
            <person name="Sheng Y."/>
            <person name="Shibata Y."/>
            <person name="Shimada H."/>
            <person name="Shimada K."/>
            <person name="Silva D."/>
            <person name="Sinclair B."/>
            <person name="Sperling S."/>
            <person name="Stupka E."/>
            <person name="Sugiura K."/>
            <person name="Sultana R."/>
            <person name="Takenaka Y."/>
            <person name="Taki K."/>
            <person name="Tammoja K."/>
            <person name="Tan S.L."/>
            <person name="Tang S."/>
            <person name="Taylor M.S."/>
            <person name="Tegner J."/>
            <person name="Teichmann S.A."/>
            <person name="Ueda H.R."/>
            <person name="van Nimwegen E."/>
            <person name="Verardo R."/>
            <person name="Wei C.L."/>
            <person name="Yagi K."/>
            <person name="Yamanishi H."/>
            <person name="Zabarovsky E."/>
            <person name="Zhu S."/>
            <person name="Zimmer A."/>
            <person name="Hide W."/>
            <person name="Bult C."/>
            <person name="Grimmond S.M."/>
            <person name="Teasdale R.D."/>
            <person name="Liu E.T."/>
            <person name="Brusic V."/>
            <person name="Quackenbush J."/>
            <person name="Wahlestedt C."/>
            <person name="Mattick J.S."/>
            <person name="Hume D.A."/>
            <person name="Kai C."/>
            <person name="Sasaki D."/>
            <person name="Tomaru Y."/>
            <person name="Fukuda S."/>
            <person name="Kanamori-Katayama M."/>
            <person name="Suzuki M."/>
            <person name="Aoki J."/>
            <person name="Arakawa T."/>
            <person name="Iida J."/>
            <person name="Imamura K."/>
            <person name="Itoh M."/>
            <person name="Kato T."/>
            <person name="Kawaji H."/>
            <person name="Kawagashira N."/>
            <person name="Kawashima T."/>
            <person name="Kojima M."/>
            <person name="Kondo S."/>
            <person name="Konno H."/>
            <person name="Nakano K."/>
            <person name="Ninomiya N."/>
            <person name="Nishio T."/>
            <person name="Okada M."/>
            <person name="Plessy C."/>
            <person name="Shibata K."/>
            <person name="Shiraki T."/>
            <person name="Suzuki S."/>
            <person name="Tagami M."/>
            <person name="Waki K."/>
            <person name="Watahiki A."/>
            <person name="Okamura-Oho Y."/>
            <person name="Suzuki H."/>
            <person name="Kawai J."/>
            <person name="Hayashizaki Y."/>
        </authorList>
    </citation>
    <scope>NUCLEOTIDE SEQUENCE [LARGE SCALE MRNA]</scope>
    <source>
        <strain>C57BL/6J</strain>
        <tissue>Placenta</tissue>
    </source>
</reference>
<reference key="2">
    <citation type="journal article" date="2004" name="Genome Res.">
        <title>The status, quality, and expansion of the NIH full-length cDNA project: the Mammalian Gene Collection (MGC).</title>
        <authorList>
            <consortium name="The MGC Project Team"/>
        </authorList>
    </citation>
    <scope>NUCLEOTIDE SEQUENCE [LARGE SCALE MRNA]</scope>
    <source>
        <tissue>Eye</tissue>
    </source>
</reference>
<reference key="3">
    <citation type="journal article" date="2015" name="Nat. Commun.">
        <title>Coordinated regulatory variation associated with gestational hyperglycaemia regulates expression of the novel hexokinase HKDC1.</title>
        <authorList>
            <person name="Guo C."/>
            <person name="Ludvik A.E."/>
            <person name="Arlotto M.E."/>
            <person name="Hayes M.G."/>
            <person name="Armstrong L.L."/>
            <person name="Scholtens D.M."/>
            <person name="Brown C.D."/>
            <person name="Newgard C.B."/>
            <person name="Becker T.C."/>
            <person name="Layden B.T."/>
            <person name="Lowe W.L."/>
            <person name="Reddy T.E."/>
        </authorList>
    </citation>
    <scope>FUNCTION</scope>
</reference>
<reference key="4">
    <citation type="journal article" date="2016" name="Endocrinology">
        <title>HKDC1 is a novel hexokinase involved in whole-body glucose use.</title>
        <authorList>
            <person name="Ludvik A.E."/>
            <person name="Pusec C.M."/>
            <person name="Priyadarshini M."/>
            <person name="Angueira A.R."/>
            <person name="Guo C."/>
            <person name="Lo A."/>
            <person name="Hershenhouse K.S."/>
            <person name="Yang G.Y."/>
            <person name="Ding X."/>
            <person name="Reddy T.E."/>
            <person name="Lowe W.L. Jr."/>
            <person name="Layden B.T."/>
        </authorList>
    </citation>
    <scope>FUNCTION</scope>
    <scope>TISSUE SPECIFICITY</scope>
    <scope>DISRUPTION PHENOTYPE</scope>
</reference>
<reference key="5">
    <citation type="journal article" date="2019" name="Biochim. Biophys. Acta">
        <title>Hepatic hexokinase domain containing 1 (HKDC1) improves whole body glucose tolerance and insulin sensitivity in pregnant mice.</title>
        <authorList>
            <person name="Khan M.W."/>
            <person name="Priyadarshini M."/>
            <person name="Cordoba-Chacon J."/>
            <person name="Becker T.C."/>
            <person name="Layden B.T."/>
        </authorList>
    </citation>
    <scope>FUNCTION</scope>
</reference>
<reference key="6">
    <citation type="journal article" date="2018" name="Hum. Mol. Genet.">
        <title>Whole-exome sequencing revealed HKDC1 as a candidate gene associated with autosomal-recessive retinitis pigmentosa.</title>
        <authorList>
            <person name="Zhang L."/>
            <person name="Sun Z."/>
            <person name="Zhao P."/>
            <person name="Huang L."/>
            <person name="Xu M."/>
            <person name="Yang Y."/>
            <person name="Chen X."/>
            <person name="Lu F."/>
            <person name="Zhang X."/>
            <person name="Wang H."/>
            <person name="Zhang S."/>
            <person name="Liu W."/>
            <person name="Jiang Z."/>
            <person name="Ma S."/>
            <person name="Chen R."/>
            <person name="Zhao C."/>
            <person name="Yang Z."/>
            <person name="Sui R."/>
            <person name="Zhu X."/>
        </authorList>
    </citation>
    <scope>TISSUE SPECIFICITY</scope>
    <scope>SUBCELLULAR LOCATION</scope>
</reference>
<keyword id="KW-0067">ATP-binding</keyword>
<keyword id="KW-0963">Cytoplasm</keyword>
<keyword id="KW-0324">Glycolysis</keyword>
<keyword id="KW-0418">Kinase</keyword>
<keyword id="KW-0472">Membrane</keyword>
<keyword id="KW-0496">Mitochondrion</keyword>
<keyword id="KW-0547">Nucleotide-binding</keyword>
<keyword id="KW-1185">Reference proteome</keyword>
<keyword id="KW-0677">Repeat</keyword>
<keyword id="KW-0808">Transferase</keyword>
<organism>
    <name type="scientific">Mus musculus</name>
    <name type="common">Mouse</name>
    <dbReference type="NCBI Taxonomy" id="10090"/>
    <lineage>
        <taxon>Eukaryota</taxon>
        <taxon>Metazoa</taxon>
        <taxon>Chordata</taxon>
        <taxon>Craniata</taxon>
        <taxon>Vertebrata</taxon>
        <taxon>Euteleostomi</taxon>
        <taxon>Mammalia</taxon>
        <taxon>Eutheria</taxon>
        <taxon>Euarchontoglires</taxon>
        <taxon>Glires</taxon>
        <taxon>Rodentia</taxon>
        <taxon>Myomorpha</taxon>
        <taxon>Muroidea</taxon>
        <taxon>Muridae</taxon>
        <taxon>Murinae</taxon>
        <taxon>Mus</taxon>
        <taxon>Mus</taxon>
    </lineage>
</organism>
<name>HKDC1_MOUSE</name>